<accession>Q81WK9</accession>
<accession>Q6HUR0</accession>
<accession>Q6KNZ1</accession>
<keyword id="KW-0963">Cytoplasm</keyword>
<keyword id="KW-0251">Elongation factor</keyword>
<keyword id="KW-0648">Protein biosynthesis</keyword>
<keyword id="KW-1185">Reference proteome</keyword>
<comment type="function">
    <text evidence="1">Associates with the EF-Tu.GDP complex and induces the exchange of GDP to GTP. It remains bound to the aminoacyl-tRNA.EF-Tu.GTP complex up to the GTP hydrolysis stage on the ribosome.</text>
</comment>
<comment type="subcellular location">
    <subcellularLocation>
        <location evidence="1">Cytoplasm</location>
    </subcellularLocation>
</comment>
<comment type="similarity">
    <text evidence="1">Belongs to the EF-Ts family.</text>
</comment>
<proteinExistence type="inferred from homology"/>
<reference key="1">
    <citation type="journal article" date="2003" name="Nature">
        <title>The genome sequence of Bacillus anthracis Ames and comparison to closely related bacteria.</title>
        <authorList>
            <person name="Read T.D."/>
            <person name="Peterson S.N."/>
            <person name="Tourasse N.J."/>
            <person name="Baillie L.W."/>
            <person name="Paulsen I.T."/>
            <person name="Nelson K.E."/>
            <person name="Tettelin H."/>
            <person name="Fouts D.E."/>
            <person name="Eisen J.A."/>
            <person name="Gill S.R."/>
            <person name="Holtzapple E.K."/>
            <person name="Okstad O.A."/>
            <person name="Helgason E."/>
            <person name="Rilstone J."/>
            <person name="Wu M."/>
            <person name="Kolonay J.F."/>
            <person name="Beanan M.J."/>
            <person name="Dodson R.J."/>
            <person name="Brinkac L.M."/>
            <person name="Gwinn M.L."/>
            <person name="DeBoy R.T."/>
            <person name="Madpu R."/>
            <person name="Daugherty S.C."/>
            <person name="Durkin A.S."/>
            <person name="Haft D.H."/>
            <person name="Nelson W.C."/>
            <person name="Peterson J.D."/>
            <person name="Pop M."/>
            <person name="Khouri H.M."/>
            <person name="Radune D."/>
            <person name="Benton J.L."/>
            <person name="Mahamoud Y."/>
            <person name="Jiang L."/>
            <person name="Hance I.R."/>
            <person name="Weidman J.F."/>
            <person name="Berry K.J."/>
            <person name="Plaut R.D."/>
            <person name="Wolf A.M."/>
            <person name="Watkins K.L."/>
            <person name="Nierman W.C."/>
            <person name="Hazen A."/>
            <person name="Cline R.T."/>
            <person name="Redmond C."/>
            <person name="Thwaite J.E."/>
            <person name="White O."/>
            <person name="Salzberg S.L."/>
            <person name="Thomason B."/>
            <person name="Friedlander A.M."/>
            <person name="Koehler T.M."/>
            <person name="Hanna P.C."/>
            <person name="Kolstoe A.-B."/>
            <person name="Fraser C.M."/>
        </authorList>
    </citation>
    <scope>NUCLEOTIDE SEQUENCE [LARGE SCALE GENOMIC DNA]</scope>
    <source>
        <strain>Ames / isolate Porton</strain>
    </source>
</reference>
<reference key="2">
    <citation type="journal article" date="2009" name="J. Bacteriol.">
        <title>The complete genome sequence of Bacillus anthracis Ames 'Ancestor'.</title>
        <authorList>
            <person name="Ravel J."/>
            <person name="Jiang L."/>
            <person name="Stanley S.T."/>
            <person name="Wilson M.R."/>
            <person name="Decker R.S."/>
            <person name="Read T.D."/>
            <person name="Worsham P."/>
            <person name="Keim P.S."/>
            <person name="Salzberg S.L."/>
            <person name="Fraser-Liggett C.M."/>
            <person name="Rasko D.A."/>
        </authorList>
    </citation>
    <scope>NUCLEOTIDE SEQUENCE [LARGE SCALE GENOMIC DNA]</scope>
    <source>
        <strain>Ames ancestor</strain>
    </source>
</reference>
<reference key="3">
    <citation type="submission" date="2004-01" db="EMBL/GenBank/DDBJ databases">
        <title>Complete genome sequence of Bacillus anthracis Sterne.</title>
        <authorList>
            <person name="Brettin T.S."/>
            <person name="Bruce D."/>
            <person name="Challacombe J.F."/>
            <person name="Gilna P."/>
            <person name="Han C."/>
            <person name="Hill K."/>
            <person name="Hitchcock P."/>
            <person name="Jackson P."/>
            <person name="Keim P."/>
            <person name="Longmire J."/>
            <person name="Lucas S."/>
            <person name="Okinaka R."/>
            <person name="Richardson P."/>
            <person name="Rubin E."/>
            <person name="Tice H."/>
        </authorList>
    </citation>
    <scope>NUCLEOTIDE SEQUENCE [LARGE SCALE GENOMIC DNA]</scope>
    <source>
        <strain>Sterne</strain>
    </source>
</reference>
<protein>
    <recommendedName>
        <fullName evidence="1">Elongation factor Ts</fullName>
        <shortName evidence="1">EF-Ts</shortName>
    </recommendedName>
</protein>
<name>EFTS_BACAN</name>
<sequence length="295" mass="32435">MAITAQMVKELREKTGAGMMDCKKALTETNGDMEKAIDFLREKGIAKAAKKADRIAAEGLTFIETNGNDGLILELNSETDFVAKNEGFQTLIKELAAHLLANKPANVEEAMAQTMENGKKVEEHINEAIAKIGEKLTLRRFEIVSKTDADAFGAYLHMGGRIGVLTVLEGSTDEAAAKDVAMHIAAVNPKYIDRDAVTAEEVEHERQVLTQQALNEGKPEKIVAKMVEGRLGKFFEEICLLDQAFVKNPDMKVRQFVESKGGTLKGFVRYAVGEGIEKREDNFAEEVMNQVKGSN</sequence>
<organism>
    <name type="scientific">Bacillus anthracis</name>
    <dbReference type="NCBI Taxonomy" id="1392"/>
    <lineage>
        <taxon>Bacteria</taxon>
        <taxon>Bacillati</taxon>
        <taxon>Bacillota</taxon>
        <taxon>Bacilli</taxon>
        <taxon>Bacillales</taxon>
        <taxon>Bacillaceae</taxon>
        <taxon>Bacillus</taxon>
        <taxon>Bacillus cereus group</taxon>
    </lineage>
</organism>
<gene>
    <name evidence="1" type="primary">tsf</name>
    <name type="ordered locus">BA_3964</name>
    <name type="ordered locus">GBAA_3964</name>
    <name type="ordered locus">BAS3677</name>
</gene>
<evidence type="ECO:0000255" key="1">
    <source>
        <dbReference type="HAMAP-Rule" id="MF_00050"/>
    </source>
</evidence>
<dbReference type="EMBL" id="AE016879">
    <property type="protein sequence ID" value="AAP27693.1"/>
    <property type="molecule type" value="Genomic_DNA"/>
</dbReference>
<dbReference type="EMBL" id="AE017334">
    <property type="protein sequence ID" value="AAT33078.1"/>
    <property type="molecule type" value="Genomic_DNA"/>
</dbReference>
<dbReference type="EMBL" id="AE017225">
    <property type="protein sequence ID" value="AAT55979.1"/>
    <property type="molecule type" value="Genomic_DNA"/>
</dbReference>
<dbReference type="RefSeq" id="NP_846207.1">
    <property type="nucleotide sequence ID" value="NC_003997.3"/>
</dbReference>
<dbReference type="RefSeq" id="WP_001018581.1">
    <property type="nucleotide sequence ID" value="NZ_WXXJ01000026.1"/>
</dbReference>
<dbReference type="RefSeq" id="YP_029928.1">
    <property type="nucleotide sequence ID" value="NC_005945.1"/>
</dbReference>
<dbReference type="SMR" id="Q81WK9"/>
<dbReference type="STRING" id="261594.GBAA_3964"/>
<dbReference type="DNASU" id="1086812"/>
<dbReference type="GeneID" id="45023654"/>
<dbReference type="KEGG" id="ban:BA_3964"/>
<dbReference type="KEGG" id="bar:GBAA_3964"/>
<dbReference type="KEGG" id="bat:BAS3677"/>
<dbReference type="PATRIC" id="fig|198094.11.peg.3934"/>
<dbReference type="eggNOG" id="COG0264">
    <property type="taxonomic scope" value="Bacteria"/>
</dbReference>
<dbReference type="HOGENOM" id="CLU_047155_0_2_9"/>
<dbReference type="OMA" id="DAGMMDC"/>
<dbReference type="OrthoDB" id="9808348at2"/>
<dbReference type="Proteomes" id="UP000000427">
    <property type="component" value="Chromosome"/>
</dbReference>
<dbReference type="Proteomes" id="UP000000594">
    <property type="component" value="Chromosome"/>
</dbReference>
<dbReference type="GO" id="GO:0005737">
    <property type="term" value="C:cytoplasm"/>
    <property type="evidence" value="ECO:0007669"/>
    <property type="project" value="UniProtKB-SubCell"/>
</dbReference>
<dbReference type="GO" id="GO:0003746">
    <property type="term" value="F:translation elongation factor activity"/>
    <property type="evidence" value="ECO:0007669"/>
    <property type="project" value="UniProtKB-UniRule"/>
</dbReference>
<dbReference type="CDD" id="cd14275">
    <property type="entry name" value="UBA_EF-Ts"/>
    <property type="match status" value="1"/>
</dbReference>
<dbReference type="FunFam" id="1.10.286.20:FF:000003">
    <property type="entry name" value="Elongation factor Ts"/>
    <property type="match status" value="1"/>
</dbReference>
<dbReference type="FunFam" id="1.10.8.10:FF:000001">
    <property type="entry name" value="Elongation factor Ts"/>
    <property type="match status" value="1"/>
</dbReference>
<dbReference type="FunFam" id="3.30.479.20:FF:000005">
    <property type="entry name" value="Elongation factor Ts"/>
    <property type="match status" value="1"/>
</dbReference>
<dbReference type="Gene3D" id="1.10.286.20">
    <property type="match status" value="1"/>
</dbReference>
<dbReference type="Gene3D" id="1.10.8.10">
    <property type="entry name" value="DNA helicase RuvA subunit, C-terminal domain"/>
    <property type="match status" value="1"/>
</dbReference>
<dbReference type="Gene3D" id="3.30.479.20">
    <property type="entry name" value="Elongation factor Ts, dimerisation domain"/>
    <property type="match status" value="2"/>
</dbReference>
<dbReference type="HAMAP" id="MF_00050">
    <property type="entry name" value="EF_Ts"/>
    <property type="match status" value="1"/>
</dbReference>
<dbReference type="InterPro" id="IPR036402">
    <property type="entry name" value="EF-Ts_dimer_sf"/>
</dbReference>
<dbReference type="InterPro" id="IPR001816">
    <property type="entry name" value="Transl_elong_EFTs/EF1B"/>
</dbReference>
<dbReference type="InterPro" id="IPR014039">
    <property type="entry name" value="Transl_elong_EFTs/EF1B_dimer"/>
</dbReference>
<dbReference type="InterPro" id="IPR018101">
    <property type="entry name" value="Transl_elong_Ts_CS"/>
</dbReference>
<dbReference type="InterPro" id="IPR009060">
    <property type="entry name" value="UBA-like_sf"/>
</dbReference>
<dbReference type="NCBIfam" id="TIGR00116">
    <property type="entry name" value="tsf"/>
    <property type="match status" value="1"/>
</dbReference>
<dbReference type="PANTHER" id="PTHR11741">
    <property type="entry name" value="ELONGATION FACTOR TS"/>
    <property type="match status" value="1"/>
</dbReference>
<dbReference type="PANTHER" id="PTHR11741:SF0">
    <property type="entry name" value="ELONGATION FACTOR TS, MITOCHONDRIAL"/>
    <property type="match status" value="1"/>
</dbReference>
<dbReference type="Pfam" id="PF00889">
    <property type="entry name" value="EF_TS"/>
    <property type="match status" value="1"/>
</dbReference>
<dbReference type="SUPFAM" id="SSF54713">
    <property type="entry name" value="Elongation factor Ts (EF-Ts), dimerisation domain"/>
    <property type="match status" value="2"/>
</dbReference>
<dbReference type="SUPFAM" id="SSF46934">
    <property type="entry name" value="UBA-like"/>
    <property type="match status" value="1"/>
</dbReference>
<dbReference type="PROSITE" id="PS01126">
    <property type="entry name" value="EF_TS_1"/>
    <property type="match status" value="1"/>
</dbReference>
<dbReference type="PROSITE" id="PS01127">
    <property type="entry name" value="EF_TS_2"/>
    <property type="match status" value="1"/>
</dbReference>
<feature type="chain" id="PRO_0000161068" description="Elongation factor Ts">
    <location>
        <begin position="1"/>
        <end position="295"/>
    </location>
</feature>
<feature type="region of interest" description="Involved in Mg(2+) ion dislocation from EF-Tu" evidence="1">
    <location>
        <begin position="79"/>
        <end position="82"/>
    </location>
</feature>